<evidence type="ECO:0000255" key="1">
    <source>
        <dbReference type="HAMAP-Rule" id="MF_01363"/>
    </source>
</evidence>
<evidence type="ECO:0000305" key="2"/>
<sequence length="103" mass="11436">MYAVIQSGGKQHRVVEGETLKVELLKAETGSTITFDDVLMVVSGESVQIGAPVVAGAKVTAEVVGHGRHDKIRIIKMRRRKHYRKQQGHRQWFTELKITGISG</sequence>
<dbReference type="EMBL" id="CR543861">
    <property type="protein sequence ID" value="CAG69654.1"/>
    <property type="molecule type" value="Genomic_DNA"/>
</dbReference>
<dbReference type="RefSeq" id="WP_004929521.1">
    <property type="nucleotide sequence ID" value="NC_005966.1"/>
</dbReference>
<dbReference type="SMR" id="Q6F8G1"/>
<dbReference type="STRING" id="202950.GCA_001485005_02871"/>
<dbReference type="GeneID" id="45235169"/>
<dbReference type="KEGG" id="aci:ACIAD2939"/>
<dbReference type="eggNOG" id="COG0261">
    <property type="taxonomic scope" value="Bacteria"/>
</dbReference>
<dbReference type="HOGENOM" id="CLU_061463_3_2_6"/>
<dbReference type="OrthoDB" id="9813334at2"/>
<dbReference type="BioCyc" id="ASP62977:ACIAD_RS13270-MONOMER"/>
<dbReference type="Proteomes" id="UP000000430">
    <property type="component" value="Chromosome"/>
</dbReference>
<dbReference type="GO" id="GO:0005737">
    <property type="term" value="C:cytoplasm"/>
    <property type="evidence" value="ECO:0007669"/>
    <property type="project" value="UniProtKB-ARBA"/>
</dbReference>
<dbReference type="GO" id="GO:1990904">
    <property type="term" value="C:ribonucleoprotein complex"/>
    <property type="evidence" value="ECO:0007669"/>
    <property type="project" value="UniProtKB-KW"/>
</dbReference>
<dbReference type="GO" id="GO:0005840">
    <property type="term" value="C:ribosome"/>
    <property type="evidence" value="ECO:0007669"/>
    <property type="project" value="UniProtKB-KW"/>
</dbReference>
<dbReference type="GO" id="GO:0019843">
    <property type="term" value="F:rRNA binding"/>
    <property type="evidence" value="ECO:0007669"/>
    <property type="project" value="UniProtKB-UniRule"/>
</dbReference>
<dbReference type="GO" id="GO:0003735">
    <property type="term" value="F:structural constituent of ribosome"/>
    <property type="evidence" value="ECO:0007669"/>
    <property type="project" value="InterPro"/>
</dbReference>
<dbReference type="GO" id="GO:0006412">
    <property type="term" value="P:translation"/>
    <property type="evidence" value="ECO:0007669"/>
    <property type="project" value="UniProtKB-UniRule"/>
</dbReference>
<dbReference type="HAMAP" id="MF_01363">
    <property type="entry name" value="Ribosomal_bL21"/>
    <property type="match status" value="1"/>
</dbReference>
<dbReference type="InterPro" id="IPR028909">
    <property type="entry name" value="bL21-like"/>
</dbReference>
<dbReference type="InterPro" id="IPR036164">
    <property type="entry name" value="bL21-like_sf"/>
</dbReference>
<dbReference type="InterPro" id="IPR001787">
    <property type="entry name" value="Ribosomal_bL21"/>
</dbReference>
<dbReference type="InterPro" id="IPR018258">
    <property type="entry name" value="Ribosomal_bL21_CS"/>
</dbReference>
<dbReference type="NCBIfam" id="TIGR00061">
    <property type="entry name" value="L21"/>
    <property type="match status" value="1"/>
</dbReference>
<dbReference type="PANTHER" id="PTHR21349">
    <property type="entry name" value="50S RIBOSOMAL PROTEIN L21"/>
    <property type="match status" value="1"/>
</dbReference>
<dbReference type="PANTHER" id="PTHR21349:SF0">
    <property type="entry name" value="LARGE RIBOSOMAL SUBUNIT PROTEIN BL21M"/>
    <property type="match status" value="1"/>
</dbReference>
<dbReference type="Pfam" id="PF00829">
    <property type="entry name" value="Ribosomal_L21p"/>
    <property type="match status" value="1"/>
</dbReference>
<dbReference type="SUPFAM" id="SSF141091">
    <property type="entry name" value="L21p-like"/>
    <property type="match status" value="1"/>
</dbReference>
<dbReference type="PROSITE" id="PS01169">
    <property type="entry name" value="RIBOSOMAL_L21"/>
    <property type="match status" value="1"/>
</dbReference>
<proteinExistence type="inferred from homology"/>
<comment type="function">
    <text evidence="1">This protein binds to 23S rRNA in the presence of protein L20.</text>
</comment>
<comment type="subunit">
    <text evidence="1">Part of the 50S ribosomal subunit. Contacts protein L20.</text>
</comment>
<comment type="similarity">
    <text evidence="1">Belongs to the bacterial ribosomal protein bL21 family.</text>
</comment>
<protein>
    <recommendedName>
        <fullName evidence="1">Large ribosomal subunit protein bL21</fullName>
    </recommendedName>
    <alternativeName>
        <fullName evidence="2">50S ribosomal protein L21</fullName>
    </alternativeName>
</protein>
<name>RL21_ACIAD</name>
<gene>
    <name evidence="1" type="primary">rplU</name>
    <name type="ordered locus">ACIAD2939</name>
</gene>
<organism>
    <name type="scientific">Acinetobacter baylyi (strain ATCC 33305 / BD413 / ADP1)</name>
    <dbReference type="NCBI Taxonomy" id="62977"/>
    <lineage>
        <taxon>Bacteria</taxon>
        <taxon>Pseudomonadati</taxon>
        <taxon>Pseudomonadota</taxon>
        <taxon>Gammaproteobacteria</taxon>
        <taxon>Moraxellales</taxon>
        <taxon>Moraxellaceae</taxon>
        <taxon>Acinetobacter</taxon>
    </lineage>
</organism>
<accession>Q6F8G1</accession>
<reference key="1">
    <citation type="journal article" date="2004" name="Nucleic Acids Res.">
        <title>Unique features revealed by the genome sequence of Acinetobacter sp. ADP1, a versatile and naturally transformation competent bacterium.</title>
        <authorList>
            <person name="Barbe V."/>
            <person name="Vallenet D."/>
            <person name="Fonknechten N."/>
            <person name="Kreimeyer A."/>
            <person name="Oztas S."/>
            <person name="Labarre L."/>
            <person name="Cruveiller S."/>
            <person name="Robert C."/>
            <person name="Duprat S."/>
            <person name="Wincker P."/>
            <person name="Ornston L.N."/>
            <person name="Weissenbach J."/>
            <person name="Marliere P."/>
            <person name="Cohen G.N."/>
            <person name="Medigue C."/>
        </authorList>
    </citation>
    <scope>NUCLEOTIDE SEQUENCE [LARGE SCALE GENOMIC DNA]</scope>
    <source>
        <strain>ATCC 33305 / BD413 / ADP1</strain>
    </source>
</reference>
<feature type="chain" id="PRO_0000269267" description="Large ribosomal subunit protein bL21">
    <location>
        <begin position="1"/>
        <end position="103"/>
    </location>
</feature>
<keyword id="KW-0687">Ribonucleoprotein</keyword>
<keyword id="KW-0689">Ribosomal protein</keyword>
<keyword id="KW-0694">RNA-binding</keyword>
<keyword id="KW-0699">rRNA-binding</keyword>